<sequence length="317" mass="35904">MERATREREKEQREQAQTNDEAQQCPECNSANVITDQSERVCEDCGLVLEDDQIDHGPEWRAFNSSERDQKSRVGAPTTKTMHDKGLTTQIDWKDKDAYGRSLDAKKRNQMNRLRKWQERIRTKDAGERNLQFALSEIDRMASALGVPRSVREVASVIYRRALKEDLIRGRSIEGVATACLYAACRQEGIPRTLEEVTEVARIDQKEIGRTYRYVAQELSLEIQPTDPKEYLPRFASDLELSEEVIAKAREIIDTSAEQGLLSGKSPSGFAAAAIYAASLLCNEKKTQREVANVANVTEVTIRNRYQEQIEAMGFGV</sequence>
<protein>
    <recommendedName>
        <fullName evidence="1">Transcription initiation factor IIB 3</fullName>
        <shortName evidence="1">TFIIB 3</shortName>
    </recommendedName>
</protein>
<gene>
    <name evidence="1" type="primary">tfbC</name>
    <name type="ordered locus">VNG_6351G</name>
</gene>
<geneLocation type="plasmid">
    <name>pNRC200</name>
</geneLocation>
<organism>
    <name type="scientific">Halobacterium salinarum (strain ATCC 700922 / JCM 11081 / NRC-1)</name>
    <name type="common">Halobacterium halobium</name>
    <dbReference type="NCBI Taxonomy" id="64091"/>
    <lineage>
        <taxon>Archaea</taxon>
        <taxon>Methanobacteriati</taxon>
        <taxon>Methanobacteriota</taxon>
        <taxon>Stenosarchaea group</taxon>
        <taxon>Halobacteria</taxon>
        <taxon>Halobacteriales</taxon>
        <taxon>Halobacteriaceae</taxon>
        <taxon>Halobacterium</taxon>
        <taxon>Halobacterium salinarum NRC-34001</taxon>
    </lineage>
</organism>
<accession>Q9HHK5</accession>
<keyword id="KW-0479">Metal-binding</keyword>
<keyword id="KW-0614">Plasmid</keyword>
<keyword id="KW-1185">Reference proteome</keyword>
<keyword id="KW-0677">Repeat</keyword>
<keyword id="KW-0804">Transcription</keyword>
<keyword id="KW-0805">Transcription regulation</keyword>
<keyword id="KW-0862">Zinc</keyword>
<keyword id="KW-0863">Zinc-finger</keyword>
<comment type="function">
    <text evidence="1">Stabilizes TBP binding to an archaeal box-A promoter. Also responsible for recruiting RNA polymerase II to the pre-initiation complex (DNA-TBP-TFIIB).</text>
</comment>
<comment type="similarity">
    <text evidence="1">Belongs to the TFIIB family.</text>
</comment>
<evidence type="ECO:0000255" key="1">
    <source>
        <dbReference type="HAMAP-Rule" id="MF_00383"/>
    </source>
</evidence>
<evidence type="ECO:0000255" key="2">
    <source>
        <dbReference type="PROSITE-ProRule" id="PRU00469"/>
    </source>
</evidence>
<evidence type="ECO:0000256" key="3">
    <source>
        <dbReference type="SAM" id="MobiDB-lite"/>
    </source>
</evidence>
<name>TF2B3_HALSA</name>
<reference key="1">
    <citation type="journal article" date="2000" name="Proc. Natl. Acad. Sci. U.S.A.">
        <title>Genome sequence of Halobacterium species NRC-1.</title>
        <authorList>
            <person name="Ng W.V."/>
            <person name="Kennedy S.P."/>
            <person name="Mahairas G.G."/>
            <person name="Berquist B."/>
            <person name="Pan M."/>
            <person name="Shukla H.D."/>
            <person name="Lasky S.R."/>
            <person name="Baliga N.S."/>
            <person name="Thorsson V."/>
            <person name="Sbrogna J."/>
            <person name="Swartzell S."/>
            <person name="Weir D."/>
            <person name="Hall J."/>
            <person name="Dahl T.A."/>
            <person name="Welti R."/>
            <person name="Goo Y.A."/>
            <person name="Leithauser B."/>
            <person name="Keller K."/>
            <person name="Cruz R."/>
            <person name="Danson M.J."/>
            <person name="Hough D.W."/>
            <person name="Maddocks D.G."/>
            <person name="Jablonski P.E."/>
            <person name="Krebs M.P."/>
            <person name="Angevine C.M."/>
            <person name="Dale H."/>
            <person name="Isenbarger T.A."/>
            <person name="Peck R.F."/>
            <person name="Pohlschroder M."/>
            <person name="Spudich J.L."/>
            <person name="Jung K.-H."/>
            <person name="Alam M."/>
            <person name="Freitas T."/>
            <person name="Hou S."/>
            <person name="Daniels C.J."/>
            <person name="Dennis P.P."/>
            <person name="Omer A.D."/>
            <person name="Ebhardt H."/>
            <person name="Lowe T.M."/>
            <person name="Liang P."/>
            <person name="Riley M."/>
            <person name="Hood L."/>
            <person name="DasSarma S."/>
        </authorList>
    </citation>
    <scope>NUCLEOTIDE SEQUENCE [LARGE SCALE GENOMIC DNA]</scope>
    <source>
        <strain>ATCC 700922 / JCM 11081 / NRC-1</strain>
    </source>
</reference>
<proteinExistence type="inferred from homology"/>
<dbReference type="EMBL" id="AE004438">
    <property type="protein sequence ID" value="AAG20975.1"/>
    <property type="molecule type" value="Genomic_DNA"/>
</dbReference>
<dbReference type="RefSeq" id="WP_010904186.1">
    <property type="nucleotide sequence ID" value="NC_002608.1"/>
</dbReference>
<dbReference type="SMR" id="Q9HHK5"/>
<dbReference type="FunCoup" id="Q9HHK5">
    <property type="interactions" value="5"/>
</dbReference>
<dbReference type="GeneID" id="5955012"/>
<dbReference type="KEGG" id="hal:VNG_6351G"/>
<dbReference type="PATRIC" id="fig|64091.14.peg.2315"/>
<dbReference type="HOGENOM" id="CLU_043736_0_0_2"/>
<dbReference type="InParanoid" id="Q9HHK5"/>
<dbReference type="OrthoDB" id="7429at2157"/>
<dbReference type="PhylomeDB" id="Q9HHK5"/>
<dbReference type="Proteomes" id="UP000000554">
    <property type="component" value="Plasmid pNRC200"/>
</dbReference>
<dbReference type="GO" id="GO:0097550">
    <property type="term" value="C:transcription preinitiation complex"/>
    <property type="evidence" value="ECO:0000318"/>
    <property type="project" value="GO_Central"/>
</dbReference>
<dbReference type="GO" id="GO:0003700">
    <property type="term" value="F:DNA-binding transcription factor activity"/>
    <property type="evidence" value="ECO:0007669"/>
    <property type="project" value="UniProtKB-UniRule"/>
</dbReference>
<dbReference type="GO" id="GO:0017025">
    <property type="term" value="F:TBP-class protein binding"/>
    <property type="evidence" value="ECO:0007669"/>
    <property type="project" value="InterPro"/>
</dbReference>
<dbReference type="GO" id="GO:0008270">
    <property type="term" value="F:zinc ion binding"/>
    <property type="evidence" value="ECO:0007669"/>
    <property type="project" value="UniProtKB-UniRule"/>
</dbReference>
<dbReference type="GO" id="GO:0006352">
    <property type="term" value="P:DNA-templated transcription initiation"/>
    <property type="evidence" value="ECO:0000318"/>
    <property type="project" value="GO_Central"/>
</dbReference>
<dbReference type="GO" id="GO:0070897">
    <property type="term" value="P:transcription preinitiation complex assembly"/>
    <property type="evidence" value="ECO:0007669"/>
    <property type="project" value="InterPro"/>
</dbReference>
<dbReference type="CDD" id="cd20549">
    <property type="entry name" value="CYCLIN_TFIIB_archaea_like_rpt1"/>
    <property type="match status" value="1"/>
</dbReference>
<dbReference type="CDD" id="cd20550">
    <property type="entry name" value="CYCLIN_TFIIB_archaea_like_rpt2"/>
    <property type="match status" value="1"/>
</dbReference>
<dbReference type="FunFam" id="1.10.472.10:FF:000023">
    <property type="entry name" value="Transcription initiation factor IIB"/>
    <property type="match status" value="1"/>
</dbReference>
<dbReference type="FunFam" id="1.10.472.170:FF:000001">
    <property type="entry name" value="Transcription initiation factor IIB"/>
    <property type="match status" value="1"/>
</dbReference>
<dbReference type="Gene3D" id="1.10.472.170">
    <property type="match status" value="1"/>
</dbReference>
<dbReference type="Gene3D" id="1.10.472.10">
    <property type="entry name" value="Cyclin-like"/>
    <property type="match status" value="1"/>
</dbReference>
<dbReference type="HAMAP" id="MF_00383">
    <property type="entry name" value="TF2B_arch"/>
    <property type="match status" value="1"/>
</dbReference>
<dbReference type="InterPro" id="IPR013763">
    <property type="entry name" value="Cyclin-like_dom"/>
</dbReference>
<dbReference type="InterPro" id="IPR036915">
    <property type="entry name" value="Cyclin-like_sf"/>
</dbReference>
<dbReference type="InterPro" id="IPR000812">
    <property type="entry name" value="TFIIB"/>
</dbReference>
<dbReference type="InterPro" id="IPR023484">
    <property type="entry name" value="TFIIB_arc"/>
</dbReference>
<dbReference type="InterPro" id="IPR023486">
    <property type="entry name" value="TFIIB_CS"/>
</dbReference>
<dbReference type="InterPro" id="IPR013150">
    <property type="entry name" value="TFIIB_cyclin"/>
</dbReference>
<dbReference type="InterPro" id="IPR013137">
    <property type="entry name" value="Znf_TFIIB"/>
</dbReference>
<dbReference type="NCBIfam" id="NF001658">
    <property type="entry name" value="PRK00423.1"/>
    <property type="match status" value="1"/>
</dbReference>
<dbReference type="PANTHER" id="PTHR11618:SF13">
    <property type="entry name" value="TRANSCRIPTION INITIATION FACTOR IIB"/>
    <property type="match status" value="1"/>
</dbReference>
<dbReference type="PANTHER" id="PTHR11618">
    <property type="entry name" value="TRANSCRIPTION INITIATION FACTOR IIB-RELATED"/>
    <property type="match status" value="1"/>
</dbReference>
<dbReference type="Pfam" id="PF00382">
    <property type="entry name" value="TFIIB"/>
    <property type="match status" value="2"/>
</dbReference>
<dbReference type="Pfam" id="PF08271">
    <property type="entry name" value="Zn_Ribbon_TF"/>
    <property type="match status" value="1"/>
</dbReference>
<dbReference type="PRINTS" id="PR00685">
    <property type="entry name" value="TIFACTORIIB"/>
</dbReference>
<dbReference type="SMART" id="SM00385">
    <property type="entry name" value="CYCLIN"/>
    <property type="match status" value="2"/>
</dbReference>
<dbReference type="SUPFAM" id="SSF47954">
    <property type="entry name" value="Cyclin-like"/>
    <property type="match status" value="2"/>
</dbReference>
<dbReference type="SUPFAM" id="SSF57783">
    <property type="entry name" value="Zinc beta-ribbon"/>
    <property type="match status" value="1"/>
</dbReference>
<dbReference type="PROSITE" id="PS00782">
    <property type="entry name" value="TFIIB"/>
    <property type="match status" value="2"/>
</dbReference>
<dbReference type="PROSITE" id="PS51134">
    <property type="entry name" value="ZF_TFIIB"/>
    <property type="match status" value="1"/>
</dbReference>
<feature type="chain" id="PRO_0000119313" description="Transcription initiation factor IIB 3">
    <location>
        <begin position="1"/>
        <end position="317"/>
    </location>
</feature>
<feature type="repeat" description="1">
    <location>
        <begin position="136"/>
        <end position="219"/>
    </location>
</feature>
<feature type="repeat" description="2">
    <location>
        <begin position="230"/>
        <end position="311"/>
    </location>
</feature>
<feature type="zinc finger region" description="TFIIB-type" evidence="2">
    <location>
        <begin position="21"/>
        <end position="50"/>
    </location>
</feature>
<feature type="region of interest" description="Disordered" evidence="3">
    <location>
        <begin position="1"/>
        <end position="25"/>
    </location>
</feature>
<feature type="region of interest" description="Disordered" evidence="3">
    <location>
        <begin position="62"/>
        <end position="83"/>
    </location>
</feature>
<feature type="compositionally biased region" description="Basic and acidic residues" evidence="3">
    <location>
        <begin position="1"/>
        <end position="14"/>
    </location>
</feature>
<feature type="binding site" evidence="2">
    <location>
        <position position="25"/>
    </location>
    <ligand>
        <name>Zn(2+)</name>
        <dbReference type="ChEBI" id="CHEBI:29105"/>
    </ligand>
</feature>
<feature type="binding site" evidence="2">
    <location>
        <position position="28"/>
    </location>
    <ligand>
        <name>Zn(2+)</name>
        <dbReference type="ChEBI" id="CHEBI:29105"/>
    </ligand>
</feature>
<feature type="binding site" evidence="2">
    <location>
        <position position="42"/>
    </location>
    <ligand>
        <name>Zn(2+)</name>
        <dbReference type="ChEBI" id="CHEBI:29105"/>
    </ligand>
</feature>
<feature type="binding site" evidence="2">
    <location>
        <position position="45"/>
    </location>
    <ligand>
        <name>Zn(2+)</name>
        <dbReference type="ChEBI" id="CHEBI:29105"/>
    </ligand>
</feature>